<sequence>MARSIKKGPFVDTHVQKKIDNALEKNDKKVIKTWSRRSTILPETIGLTFAVHNGRKFVPVYITENMIGHKLGEFAPTRTFHGHAEKKAAAPAAKK</sequence>
<protein>
    <recommendedName>
        <fullName evidence="1">Small ribosomal subunit protein uS19</fullName>
    </recommendedName>
    <alternativeName>
        <fullName evidence="2">30S ribosomal protein S19</fullName>
    </alternativeName>
</protein>
<accession>Q6MJ18</accession>
<gene>
    <name evidence="1" type="primary">rpsS</name>
    <name type="ordered locus">Bd2972</name>
</gene>
<proteinExistence type="inferred from homology"/>
<keyword id="KW-1185">Reference proteome</keyword>
<keyword id="KW-0687">Ribonucleoprotein</keyword>
<keyword id="KW-0689">Ribosomal protein</keyword>
<keyword id="KW-0694">RNA-binding</keyword>
<keyword id="KW-0699">rRNA-binding</keyword>
<dbReference type="EMBL" id="BX842654">
    <property type="protein sequence ID" value="CAE80744.1"/>
    <property type="molecule type" value="Genomic_DNA"/>
</dbReference>
<dbReference type="RefSeq" id="WP_011165348.1">
    <property type="nucleotide sequence ID" value="NC_005363.1"/>
</dbReference>
<dbReference type="SMR" id="Q6MJ18"/>
<dbReference type="STRING" id="264462.Bd2972"/>
<dbReference type="GeneID" id="93013835"/>
<dbReference type="KEGG" id="bba:Bd2972"/>
<dbReference type="eggNOG" id="COG0185">
    <property type="taxonomic scope" value="Bacteria"/>
</dbReference>
<dbReference type="HOGENOM" id="CLU_144911_0_1_7"/>
<dbReference type="Proteomes" id="UP000008080">
    <property type="component" value="Chromosome"/>
</dbReference>
<dbReference type="GO" id="GO:0005737">
    <property type="term" value="C:cytoplasm"/>
    <property type="evidence" value="ECO:0007669"/>
    <property type="project" value="UniProtKB-ARBA"/>
</dbReference>
<dbReference type="GO" id="GO:0015935">
    <property type="term" value="C:small ribosomal subunit"/>
    <property type="evidence" value="ECO:0007669"/>
    <property type="project" value="InterPro"/>
</dbReference>
<dbReference type="GO" id="GO:0019843">
    <property type="term" value="F:rRNA binding"/>
    <property type="evidence" value="ECO:0007669"/>
    <property type="project" value="UniProtKB-UniRule"/>
</dbReference>
<dbReference type="GO" id="GO:0003735">
    <property type="term" value="F:structural constituent of ribosome"/>
    <property type="evidence" value="ECO:0007669"/>
    <property type="project" value="InterPro"/>
</dbReference>
<dbReference type="GO" id="GO:0000028">
    <property type="term" value="P:ribosomal small subunit assembly"/>
    <property type="evidence" value="ECO:0007669"/>
    <property type="project" value="TreeGrafter"/>
</dbReference>
<dbReference type="GO" id="GO:0006412">
    <property type="term" value="P:translation"/>
    <property type="evidence" value="ECO:0007669"/>
    <property type="project" value="UniProtKB-UniRule"/>
</dbReference>
<dbReference type="FunFam" id="3.30.860.10:FF:000001">
    <property type="entry name" value="30S ribosomal protein S19"/>
    <property type="match status" value="1"/>
</dbReference>
<dbReference type="Gene3D" id="3.30.860.10">
    <property type="entry name" value="30s Ribosomal Protein S19, Chain A"/>
    <property type="match status" value="1"/>
</dbReference>
<dbReference type="HAMAP" id="MF_00531">
    <property type="entry name" value="Ribosomal_uS19"/>
    <property type="match status" value="1"/>
</dbReference>
<dbReference type="InterPro" id="IPR002222">
    <property type="entry name" value="Ribosomal_uS19"/>
</dbReference>
<dbReference type="InterPro" id="IPR005732">
    <property type="entry name" value="Ribosomal_uS19_bac-type"/>
</dbReference>
<dbReference type="InterPro" id="IPR020934">
    <property type="entry name" value="Ribosomal_uS19_CS"/>
</dbReference>
<dbReference type="InterPro" id="IPR023575">
    <property type="entry name" value="Ribosomal_uS19_SF"/>
</dbReference>
<dbReference type="NCBIfam" id="TIGR01050">
    <property type="entry name" value="rpsS_bact"/>
    <property type="match status" value="1"/>
</dbReference>
<dbReference type="PANTHER" id="PTHR11880">
    <property type="entry name" value="RIBOSOMAL PROTEIN S19P FAMILY MEMBER"/>
    <property type="match status" value="1"/>
</dbReference>
<dbReference type="PANTHER" id="PTHR11880:SF8">
    <property type="entry name" value="SMALL RIBOSOMAL SUBUNIT PROTEIN US19M"/>
    <property type="match status" value="1"/>
</dbReference>
<dbReference type="Pfam" id="PF00203">
    <property type="entry name" value="Ribosomal_S19"/>
    <property type="match status" value="1"/>
</dbReference>
<dbReference type="PIRSF" id="PIRSF002144">
    <property type="entry name" value="Ribosomal_S19"/>
    <property type="match status" value="1"/>
</dbReference>
<dbReference type="PRINTS" id="PR00975">
    <property type="entry name" value="RIBOSOMALS19"/>
</dbReference>
<dbReference type="SUPFAM" id="SSF54570">
    <property type="entry name" value="Ribosomal protein S19"/>
    <property type="match status" value="1"/>
</dbReference>
<dbReference type="PROSITE" id="PS00323">
    <property type="entry name" value="RIBOSOMAL_S19"/>
    <property type="match status" value="1"/>
</dbReference>
<name>RS19_BDEBA</name>
<reference key="1">
    <citation type="journal article" date="2004" name="Science">
        <title>A predator unmasked: life cycle of Bdellovibrio bacteriovorus from a genomic perspective.</title>
        <authorList>
            <person name="Rendulic S."/>
            <person name="Jagtap P."/>
            <person name="Rosinus A."/>
            <person name="Eppinger M."/>
            <person name="Baar C."/>
            <person name="Lanz C."/>
            <person name="Keller H."/>
            <person name="Lambert C."/>
            <person name="Evans K.J."/>
            <person name="Goesmann A."/>
            <person name="Meyer F."/>
            <person name="Sockett R.E."/>
            <person name="Schuster S.C."/>
        </authorList>
    </citation>
    <scope>NUCLEOTIDE SEQUENCE [LARGE SCALE GENOMIC DNA]</scope>
    <source>
        <strain>ATCC 15356 / DSM 50701 / NCIMB 9529 / HD100</strain>
    </source>
</reference>
<organism>
    <name type="scientific">Bdellovibrio bacteriovorus (strain ATCC 15356 / DSM 50701 / NCIMB 9529 / HD100)</name>
    <dbReference type="NCBI Taxonomy" id="264462"/>
    <lineage>
        <taxon>Bacteria</taxon>
        <taxon>Pseudomonadati</taxon>
        <taxon>Bdellovibrionota</taxon>
        <taxon>Bdellovibrionia</taxon>
        <taxon>Bdellovibrionales</taxon>
        <taxon>Pseudobdellovibrionaceae</taxon>
        <taxon>Bdellovibrio</taxon>
    </lineage>
</organism>
<comment type="function">
    <text evidence="1">Protein S19 forms a complex with S13 that binds strongly to the 16S ribosomal RNA.</text>
</comment>
<comment type="similarity">
    <text evidence="1">Belongs to the universal ribosomal protein uS19 family.</text>
</comment>
<feature type="chain" id="PRO_0000129784" description="Small ribosomal subunit protein uS19">
    <location>
        <begin position="1"/>
        <end position="95"/>
    </location>
</feature>
<evidence type="ECO:0000255" key="1">
    <source>
        <dbReference type="HAMAP-Rule" id="MF_00531"/>
    </source>
</evidence>
<evidence type="ECO:0000305" key="2"/>